<accession>Q8NVH5</accession>
<protein>
    <recommendedName>
        <fullName evidence="1">Thiamine-phosphate synthase</fullName>
        <shortName evidence="1">TP synthase</shortName>
        <shortName evidence="1">TPS</shortName>
        <ecNumber evidence="1">2.5.1.3</ecNumber>
    </recommendedName>
    <alternativeName>
        <fullName evidence="1">Thiamine-phosphate pyrophosphorylase</fullName>
        <shortName evidence="1">TMP pyrophosphorylase</shortName>
        <shortName evidence="1">TMP-PPase</shortName>
    </alternativeName>
</protein>
<proteinExistence type="inferred from homology"/>
<evidence type="ECO:0000255" key="1">
    <source>
        <dbReference type="HAMAP-Rule" id="MF_00097"/>
    </source>
</evidence>
<organism>
    <name type="scientific">Staphylococcus aureus (strain MW2)</name>
    <dbReference type="NCBI Taxonomy" id="196620"/>
    <lineage>
        <taxon>Bacteria</taxon>
        <taxon>Bacillati</taxon>
        <taxon>Bacillota</taxon>
        <taxon>Bacilli</taxon>
        <taxon>Bacillales</taxon>
        <taxon>Staphylococcaceae</taxon>
        <taxon>Staphylococcus</taxon>
    </lineage>
</organism>
<comment type="function">
    <text evidence="1">Condenses 4-methyl-5-(beta-hydroxyethyl)thiazole monophosphate (THZ-P) and 2-methyl-4-amino-5-hydroxymethyl pyrimidine pyrophosphate (HMP-PP) to form thiamine monophosphate (TMP).</text>
</comment>
<comment type="catalytic activity">
    <reaction evidence="1">
        <text>2-[(2R,5Z)-2-carboxy-4-methylthiazol-5(2H)-ylidene]ethyl phosphate + 4-amino-2-methyl-5-(diphosphooxymethyl)pyrimidine + 2 H(+) = thiamine phosphate + CO2 + diphosphate</text>
        <dbReference type="Rhea" id="RHEA:47844"/>
        <dbReference type="ChEBI" id="CHEBI:15378"/>
        <dbReference type="ChEBI" id="CHEBI:16526"/>
        <dbReference type="ChEBI" id="CHEBI:33019"/>
        <dbReference type="ChEBI" id="CHEBI:37575"/>
        <dbReference type="ChEBI" id="CHEBI:57841"/>
        <dbReference type="ChEBI" id="CHEBI:62899"/>
        <dbReference type="EC" id="2.5.1.3"/>
    </reaction>
</comment>
<comment type="catalytic activity">
    <reaction evidence="1">
        <text>2-(2-carboxy-4-methylthiazol-5-yl)ethyl phosphate + 4-amino-2-methyl-5-(diphosphooxymethyl)pyrimidine + 2 H(+) = thiamine phosphate + CO2 + diphosphate</text>
        <dbReference type="Rhea" id="RHEA:47848"/>
        <dbReference type="ChEBI" id="CHEBI:15378"/>
        <dbReference type="ChEBI" id="CHEBI:16526"/>
        <dbReference type="ChEBI" id="CHEBI:33019"/>
        <dbReference type="ChEBI" id="CHEBI:37575"/>
        <dbReference type="ChEBI" id="CHEBI:57841"/>
        <dbReference type="ChEBI" id="CHEBI:62890"/>
        <dbReference type="EC" id="2.5.1.3"/>
    </reaction>
</comment>
<comment type="catalytic activity">
    <reaction evidence="1">
        <text>4-methyl-5-(2-phosphooxyethyl)-thiazole + 4-amino-2-methyl-5-(diphosphooxymethyl)pyrimidine + H(+) = thiamine phosphate + diphosphate</text>
        <dbReference type="Rhea" id="RHEA:22328"/>
        <dbReference type="ChEBI" id="CHEBI:15378"/>
        <dbReference type="ChEBI" id="CHEBI:33019"/>
        <dbReference type="ChEBI" id="CHEBI:37575"/>
        <dbReference type="ChEBI" id="CHEBI:57841"/>
        <dbReference type="ChEBI" id="CHEBI:58296"/>
        <dbReference type="EC" id="2.5.1.3"/>
    </reaction>
</comment>
<comment type="cofactor">
    <cofactor evidence="1">
        <name>Mg(2+)</name>
        <dbReference type="ChEBI" id="CHEBI:18420"/>
    </cofactor>
    <text evidence="1">Binds 1 Mg(2+) ion per subunit.</text>
</comment>
<comment type="pathway">
    <text evidence="1">Cofactor biosynthesis; thiamine diphosphate biosynthesis; thiamine phosphate from 4-amino-2-methyl-5-diphosphomethylpyrimidine and 4-methyl-5-(2-phosphoethyl)-thiazole: step 1/1.</text>
</comment>
<comment type="similarity">
    <text evidence="1">Belongs to the thiamine-phosphate synthase family.</text>
</comment>
<dbReference type="EC" id="2.5.1.3" evidence="1"/>
<dbReference type="EMBL" id="BA000033">
    <property type="protein sequence ID" value="BAB95879.1"/>
    <property type="molecule type" value="Genomic_DNA"/>
</dbReference>
<dbReference type="RefSeq" id="WP_000483155.1">
    <property type="nucleotide sequence ID" value="NC_003923.1"/>
</dbReference>
<dbReference type="SMR" id="Q8NVH5"/>
<dbReference type="KEGG" id="sam:MW2014"/>
<dbReference type="HOGENOM" id="CLU_018272_3_2_9"/>
<dbReference type="UniPathway" id="UPA00060">
    <property type="reaction ID" value="UER00141"/>
</dbReference>
<dbReference type="GO" id="GO:0005737">
    <property type="term" value="C:cytoplasm"/>
    <property type="evidence" value="ECO:0007669"/>
    <property type="project" value="TreeGrafter"/>
</dbReference>
<dbReference type="GO" id="GO:0000287">
    <property type="term" value="F:magnesium ion binding"/>
    <property type="evidence" value="ECO:0007669"/>
    <property type="project" value="UniProtKB-UniRule"/>
</dbReference>
<dbReference type="GO" id="GO:0004789">
    <property type="term" value="F:thiamine-phosphate diphosphorylase activity"/>
    <property type="evidence" value="ECO:0007669"/>
    <property type="project" value="UniProtKB-UniRule"/>
</dbReference>
<dbReference type="GO" id="GO:0009228">
    <property type="term" value="P:thiamine biosynthetic process"/>
    <property type="evidence" value="ECO:0007669"/>
    <property type="project" value="UniProtKB-KW"/>
</dbReference>
<dbReference type="GO" id="GO:0009229">
    <property type="term" value="P:thiamine diphosphate biosynthetic process"/>
    <property type="evidence" value="ECO:0007669"/>
    <property type="project" value="UniProtKB-UniRule"/>
</dbReference>
<dbReference type="CDD" id="cd00564">
    <property type="entry name" value="TMP_TenI"/>
    <property type="match status" value="1"/>
</dbReference>
<dbReference type="FunFam" id="3.20.20.70:FF:000096">
    <property type="entry name" value="Thiamine-phosphate synthase"/>
    <property type="match status" value="1"/>
</dbReference>
<dbReference type="Gene3D" id="3.20.20.70">
    <property type="entry name" value="Aldolase class I"/>
    <property type="match status" value="1"/>
</dbReference>
<dbReference type="HAMAP" id="MF_00097">
    <property type="entry name" value="TMP_synthase"/>
    <property type="match status" value="1"/>
</dbReference>
<dbReference type="InterPro" id="IPR013785">
    <property type="entry name" value="Aldolase_TIM"/>
</dbReference>
<dbReference type="InterPro" id="IPR036206">
    <property type="entry name" value="ThiamineP_synth_sf"/>
</dbReference>
<dbReference type="InterPro" id="IPR022998">
    <property type="entry name" value="ThiamineP_synth_TenI"/>
</dbReference>
<dbReference type="InterPro" id="IPR034291">
    <property type="entry name" value="TMP_synthase"/>
</dbReference>
<dbReference type="NCBIfam" id="TIGR00693">
    <property type="entry name" value="thiE"/>
    <property type="match status" value="1"/>
</dbReference>
<dbReference type="PANTHER" id="PTHR20857">
    <property type="entry name" value="THIAMINE-PHOSPHATE PYROPHOSPHORYLASE"/>
    <property type="match status" value="1"/>
</dbReference>
<dbReference type="PANTHER" id="PTHR20857:SF15">
    <property type="entry name" value="THIAMINE-PHOSPHATE SYNTHASE"/>
    <property type="match status" value="1"/>
</dbReference>
<dbReference type="Pfam" id="PF02581">
    <property type="entry name" value="TMP-TENI"/>
    <property type="match status" value="1"/>
</dbReference>
<dbReference type="SUPFAM" id="SSF51391">
    <property type="entry name" value="Thiamin phosphate synthase"/>
    <property type="match status" value="1"/>
</dbReference>
<reference key="1">
    <citation type="journal article" date="2002" name="Lancet">
        <title>Genome and virulence determinants of high virulence community-acquired MRSA.</title>
        <authorList>
            <person name="Baba T."/>
            <person name="Takeuchi F."/>
            <person name="Kuroda M."/>
            <person name="Yuzawa H."/>
            <person name="Aoki K."/>
            <person name="Oguchi A."/>
            <person name="Nagai Y."/>
            <person name="Iwama N."/>
            <person name="Asano K."/>
            <person name="Naimi T."/>
            <person name="Kuroda H."/>
            <person name="Cui L."/>
            <person name="Yamamoto K."/>
            <person name="Hiramatsu K."/>
        </authorList>
    </citation>
    <scope>NUCLEOTIDE SEQUENCE [LARGE SCALE GENOMIC DNA]</scope>
    <source>
        <strain>MW2</strain>
    </source>
</reference>
<keyword id="KW-0460">Magnesium</keyword>
<keyword id="KW-0479">Metal-binding</keyword>
<keyword id="KW-0784">Thiamine biosynthesis</keyword>
<keyword id="KW-0808">Transferase</keyword>
<name>THIE_STAAW</name>
<gene>
    <name evidence="1" type="primary">thiE</name>
    <name type="ordered locus">MW2014</name>
</gene>
<feature type="chain" id="PRO_0000157047" description="Thiamine-phosphate synthase">
    <location>
        <begin position="1"/>
        <end position="213"/>
    </location>
</feature>
<feature type="binding site" evidence="1">
    <location>
        <begin position="40"/>
        <end position="44"/>
    </location>
    <ligand>
        <name>4-amino-2-methyl-5-(diphosphooxymethyl)pyrimidine</name>
        <dbReference type="ChEBI" id="CHEBI:57841"/>
    </ligand>
</feature>
<feature type="binding site" evidence="1">
    <location>
        <position position="75"/>
    </location>
    <ligand>
        <name>4-amino-2-methyl-5-(diphosphooxymethyl)pyrimidine</name>
        <dbReference type="ChEBI" id="CHEBI:57841"/>
    </ligand>
</feature>
<feature type="binding site" evidence="1">
    <location>
        <position position="76"/>
    </location>
    <ligand>
        <name>Mg(2+)</name>
        <dbReference type="ChEBI" id="CHEBI:18420"/>
    </ligand>
</feature>
<feature type="binding site" evidence="1">
    <location>
        <position position="95"/>
    </location>
    <ligand>
        <name>Mg(2+)</name>
        <dbReference type="ChEBI" id="CHEBI:18420"/>
    </ligand>
</feature>
<feature type="binding site" evidence="1">
    <location>
        <position position="113"/>
    </location>
    <ligand>
        <name>4-amino-2-methyl-5-(diphosphooxymethyl)pyrimidine</name>
        <dbReference type="ChEBI" id="CHEBI:57841"/>
    </ligand>
</feature>
<feature type="binding site" evidence="1">
    <location>
        <begin position="139"/>
        <end position="141"/>
    </location>
    <ligand>
        <name>2-[(2R,5Z)-2-carboxy-4-methylthiazol-5(2H)-ylidene]ethyl phosphate</name>
        <dbReference type="ChEBI" id="CHEBI:62899"/>
    </ligand>
</feature>
<feature type="binding site" evidence="1">
    <location>
        <position position="142"/>
    </location>
    <ligand>
        <name>4-amino-2-methyl-5-(diphosphooxymethyl)pyrimidine</name>
        <dbReference type="ChEBI" id="CHEBI:57841"/>
    </ligand>
</feature>
<feature type="binding site" evidence="1">
    <location>
        <position position="171"/>
    </location>
    <ligand>
        <name>2-[(2R,5Z)-2-carboxy-4-methylthiazol-5(2H)-ylidene]ethyl phosphate</name>
        <dbReference type="ChEBI" id="CHEBI:62899"/>
    </ligand>
</feature>
<feature type="binding site" evidence="1">
    <location>
        <begin position="191"/>
        <end position="192"/>
    </location>
    <ligand>
        <name>2-[(2R,5Z)-2-carboxy-4-methylthiazol-5(2H)-ylidene]ethyl phosphate</name>
        <dbReference type="ChEBI" id="CHEBI:62899"/>
    </ligand>
</feature>
<sequence>MFNQSYLNVYFICGTSDVPSHRTIHEVLEAALKAGITLFQFREKGESALKGNDKLVLAKELQHLCHQYDVPFIVNDDVSLAKEINADGIHVGQDDAKVKEIAQYFTDKIIGLSISDLDEYAKSDLTHVDYIGVGPIYPTPSKHDAHIPVGPEMIATFKEMNPQLPIVAIGGINTNNVAPIVEAGANGISVISAISKSENIENTVNRFKDFFNN</sequence>